<reference key="1">
    <citation type="journal article" date="2005" name="Plant Cell">
        <title>The Arabidopsis plastidic glucose 6-phosphate/phosphate translocator GPT1 is essential for pollen maturation and embryo sac development.</title>
        <authorList>
            <person name="Niewiadomski P."/>
            <person name="Knappe S."/>
            <person name="Geimer S."/>
            <person name="Fischer K."/>
            <person name="Schulz B."/>
            <person name="Unte U.S."/>
            <person name="Rosso M.G."/>
            <person name="Ache P."/>
            <person name="Fluegge U.-I."/>
            <person name="Schneider A."/>
        </authorList>
    </citation>
    <scope>NUCLEOTIDE SEQUENCE [MRNA]</scope>
    <scope>FUNCTION</scope>
    <scope>TISSUE SPECIFICITY</scope>
    <scope>DEVELOPMENTAL STAGE</scope>
    <scope>DISRUPTION PHENOTYPE</scope>
</reference>
<reference key="2">
    <citation type="journal article" date="1997" name="DNA Res.">
        <title>Structural analysis of Arabidopsis thaliana chromosome 5. I. Sequence features of the 1.6 Mb regions covered by twenty physically assigned P1 clones.</title>
        <authorList>
            <person name="Sato S."/>
            <person name="Kotani H."/>
            <person name="Nakamura Y."/>
            <person name="Kaneko T."/>
            <person name="Asamizu E."/>
            <person name="Fukami M."/>
            <person name="Miyajima N."/>
            <person name="Tabata S."/>
        </authorList>
    </citation>
    <scope>NUCLEOTIDE SEQUENCE [LARGE SCALE GENOMIC DNA]</scope>
    <source>
        <strain>cv. Columbia</strain>
    </source>
</reference>
<reference key="3">
    <citation type="journal article" date="2017" name="Plant J.">
        <title>Araport11: a complete reannotation of the Arabidopsis thaliana reference genome.</title>
        <authorList>
            <person name="Cheng C.Y."/>
            <person name="Krishnakumar V."/>
            <person name="Chan A.P."/>
            <person name="Thibaud-Nissen F."/>
            <person name="Schobel S."/>
            <person name="Town C.D."/>
        </authorList>
    </citation>
    <scope>GENOME REANNOTATION</scope>
    <source>
        <strain>cv. Columbia</strain>
    </source>
</reference>
<reference key="4">
    <citation type="journal article" date="2003" name="Science">
        <title>Empirical analysis of transcriptional activity in the Arabidopsis genome.</title>
        <authorList>
            <person name="Yamada K."/>
            <person name="Lim J."/>
            <person name="Dale J.M."/>
            <person name="Chen H."/>
            <person name="Shinn P."/>
            <person name="Palm C.J."/>
            <person name="Southwick A.M."/>
            <person name="Wu H.C."/>
            <person name="Kim C.J."/>
            <person name="Nguyen M."/>
            <person name="Pham P.K."/>
            <person name="Cheuk R.F."/>
            <person name="Karlin-Newmann G."/>
            <person name="Liu S.X."/>
            <person name="Lam B."/>
            <person name="Sakano H."/>
            <person name="Wu T."/>
            <person name="Yu G."/>
            <person name="Miranda M."/>
            <person name="Quach H.L."/>
            <person name="Tripp M."/>
            <person name="Chang C.H."/>
            <person name="Lee J.M."/>
            <person name="Toriumi M.J."/>
            <person name="Chan M.M."/>
            <person name="Tang C.C."/>
            <person name="Onodera C.S."/>
            <person name="Deng J.M."/>
            <person name="Akiyama K."/>
            <person name="Ansari Y."/>
            <person name="Arakawa T."/>
            <person name="Banh J."/>
            <person name="Banno F."/>
            <person name="Bowser L."/>
            <person name="Brooks S.Y."/>
            <person name="Carninci P."/>
            <person name="Chao Q."/>
            <person name="Choy N."/>
            <person name="Enju A."/>
            <person name="Goldsmith A.D."/>
            <person name="Gurjal M."/>
            <person name="Hansen N.F."/>
            <person name="Hayashizaki Y."/>
            <person name="Johnson-Hopson C."/>
            <person name="Hsuan V.W."/>
            <person name="Iida K."/>
            <person name="Karnes M."/>
            <person name="Khan S."/>
            <person name="Koesema E."/>
            <person name="Ishida J."/>
            <person name="Jiang P.X."/>
            <person name="Jones T."/>
            <person name="Kawai J."/>
            <person name="Kamiya A."/>
            <person name="Meyers C."/>
            <person name="Nakajima M."/>
            <person name="Narusaka M."/>
            <person name="Seki M."/>
            <person name="Sakurai T."/>
            <person name="Satou M."/>
            <person name="Tamse R."/>
            <person name="Vaysberg M."/>
            <person name="Wallender E.K."/>
            <person name="Wong C."/>
            <person name="Yamamura Y."/>
            <person name="Yuan S."/>
            <person name="Shinozaki K."/>
            <person name="Davis R.W."/>
            <person name="Theologis A."/>
            <person name="Ecker J.R."/>
        </authorList>
    </citation>
    <scope>NUCLEOTIDE SEQUENCE [LARGE SCALE MRNA]</scope>
    <source>
        <strain>cv. Columbia</strain>
    </source>
</reference>
<reference key="5">
    <citation type="submission" date="2006-07" db="EMBL/GenBank/DDBJ databases">
        <title>Large-scale analysis of RIKEN Arabidopsis full-length (RAFL) cDNAs.</title>
        <authorList>
            <person name="Totoki Y."/>
            <person name="Seki M."/>
            <person name="Ishida J."/>
            <person name="Nakajima M."/>
            <person name="Enju A."/>
            <person name="Kamiya A."/>
            <person name="Narusaka M."/>
            <person name="Shin-i T."/>
            <person name="Nakagawa M."/>
            <person name="Sakamoto N."/>
            <person name="Oishi K."/>
            <person name="Kohara Y."/>
            <person name="Kobayashi M."/>
            <person name="Toyoda A."/>
            <person name="Sakaki Y."/>
            <person name="Sakurai T."/>
            <person name="Iida K."/>
            <person name="Akiyama K."/>
            <person name="Satou M."/>
            <person name="Toyoda T."/>
            <person name="Konagaya A."/>
            <person name="Carninci P."/>
            <person name="Kawai J."/>
            <person name="Hayashizaki Y."/>
            <person name="Shinozaki K."/>
        </authorList>
    </citation>
    <scope>NUCLEOTIDE SEQUENCE [LARGE SCALE MRNA]</scope>
    <source>
        <strain>cv. Columbia</strain>
    </source>
</reference>
<reference key="6">
    <citation type="submission" date="2002-03" db="EMBL/GenBank/DDBJ databases">
        <title>Full-length cDNA from Arabidopsis thaliana.</title>
        <authorList>
            <person name="Brover V.V."/>
            <person name="Troukhan M.E."/>
            <person name="Alexandrov N.A."/>
            <person name="Lu Y.-P."/>
            <person name="Flavell R.B."/>
            <person name="Feldmann K.A."/>
        </authorList>
    </citation>
    <scope>NUCLEOTIDE SEQUENCE [LARGE SCALE MRNA]</scope>
</reference>
<reference key="7">
    <citation type="journal article" date="2002" name="Plant Cell">
        <title>Contrapuntal networks of gene expression during Arabidopsis seed filling.</title>
        <authorList>
            <person name="Ruuska S.A."/>
            <person name="Girke T."/>
            <person name="Benning C."/>
            <person name="Ohlrogge J.B."/>
        </authorList>
    </citation>
    <scope>DEVELOPMENTAL STAGE</scope>
</reference>
<reference key="8">
    <citation type="journal article" date="2010" name="Plant J.">
        <title>The plastidial glucose-6-phosphate/phosphate antiporter GPT1 is essential for morphogenesis in Arabidopsis embryos.</title>
        <authorList>
            <person name="Andriotis V.M."/>
            <person name="Pike M.J."/>
            <person name="Bunnewell S."/>
            <person name="Hills M.J."/>
            <person name="Smith A.M."/>
        </authorList>
    </citation>
    <scope>FUNCTION</scope>
</reference>
<reference key="9">
    <citation type="journal article" date="2014" name="Proc. Natl. Acad. Sci. U.S.A.">
        <title>The Golgi localized bifunctional UDP-rhamnose/UDP-galactose transporter family of Arabidopsis.</title>
        <authorList>
            <person name="Rautengarten C."/>
            <person name="Ebert B."/>
            <person name="Moreno I."/>
            <person name="Temple H."/>
            <person name="Herter T."/>
            <person name="Link B."/>
            <person name="Donas-Cofre D."/>
            <person name="Moreno A."/>
            <person name="Saez-Aguayo S."/>
            <person name="Blanco F."/>
            <person name="Mortimer J.C."/>
            <person name="Schultink A."/>
            <person name="Reiter W.D."/>
            <person name="Dupree P."/>
            <person name="Pauly M."/>
            <person name="Heazlewood J.L."/>
            <person name="Scheller H.V."/>
            <person name="Orellana A."/>
        </authorList>
    </citation>
    <scope>GENE FAMILY</scope>
</reference>
<reference key="10">
    <citation type="journal article" date="2020" name="Plant Cell">
        <title>The Arabidopsis plastidial glucose-6-phosphate transporter GPT1 is dually targeted to peroxisomes via the endoplasmic reticulum.</title>
        <authorList>
            <person name="Baune M.C."/>
            <person name="Lansing H."/>
            <person name="Fischer K."/>
            <person name="Meyer T."/>
            <person name="Charton L."/>
            <person name="Linka N."/>
            <person name="von Schaewen A."/>
        </authorList>
    </citation>
    <scope>FUNCTION</scope>
    <scope>SUBUNIT</scope>
    <scope>SUBCELLULAR LOCATION</scope>
    <scope>MUTAGENESIS OF SER-27 AND CYS-65</scope>
</reference>
<name>GPT1_ARATH</name>
<sequence>MVLSVKQTLSPKIGLFRRNPSSSLGRSPVSLSFPSTELPKRTVLAVSKPLHLSSSLRAKSPVVRCEAYEADRSEPHPIGDDAAAAETKSEAAKKLKIGIYFATWWALNVVFNIYNKKVLNAYPYPWLTSTLSLAAGSLMMLISWAVGIVETPKTDFDFWKTLFPVAVAHTIGHVAATVSMSKVAVSFTHIIKSGEPAFSVLVSRFILGETFPTSVYLSLIPIIGGCALSALTELNFNMIGFMGAMISNLAFVFRNIFSKKGMKGKSVSGMNYYACLSMLSLLILTPFAIAVEGPQMWVDGWQTALATVGPQFVWWVVAQSVFYHLYNQVSYMSLDQISPLTFSVGNTMKRISVIVSSIIIFRTPVQPVNALGAAIAILGTFLYSQAKL</sequence>
<accession>Q9M5A9</accession>
<accession>Q0WW77</accession>
<accession>Q8LCH1</accession>
<accession>Q9FFU8</accession>
<comment type="function">
    <text evidence="3 4 5">Glucose 6-phosphate (Glc6P) transporter (PubMed:15722468). Also transports inorganic phosphate, 3-phosphoglycerate, triose phosphates and, to a leser extent, phosphoenolpyruvate (PubMed:15722468). Responsible for the transport of Glc6P into plastids of heterotrophic tissues where it can be used as a carbon source for starch biosynthesis, as substrate for fatty acid biosynthesis or as substrate for NADPH generation via the oxidative pentose phosphate pathway (OPPP) (PubMed:15722468). Required for pollen maturation and embryo sac development (PubMed:15722468, PubMed:20659277). Preferentially exchanges Glc6P for ribulose-5-phosphate (Ru5P) in reconstituted yeast proteoliposomes (PubMed:32111666). May supply the substrate (Glc6P) for OPPP reactions inside peroxisomes and exchange it with the product Ru5P which leaves the organelle (PubMed:32111666).</text>
</comment>
<comment type="subcellular location">
    <subcellularLocation>
        <location evidence="5">Plastid</location>
        <location evidence="5">Chloroplast membrane</location>
        <topology evidence="1">Multi-pass membrane protein</topology>
    </subcellularLocation>
    <subcellularLocation>
        <location evidence="5">Endoplasmic reticulum membrane</location>
        <topology evidence="1">Multi-pass membrane protein</topology>
    </subcellularLocation>
    <subcellularLocation>
        <location evidence="5">Peroxisome membrane</location>
        <topology evidence="1">Multi-pass membrane protein</topology>
    </subcellularLocation>
    <text evidence="5">Targeted to peroxisomes via the endoplasmic reticulum.</text>
</comment>
<comment type="tissue specificity">
    <text evidence="3">Expressed in seeds, flowers, rosette leaves, and roots, with highest levels found in stamens. Found in the root cap, in guard cells and in mesophyll cells.</text>
</comment>
<comment type="developmental stage">
    <text evidence="2 3">Expressed during the transient accumulation of starch in the developing seeds. Decline rapidly 8 days after flowering. Not detected in mature seeds.</text>
</comment>
<comment type="disruption phenotype">
    <text evidence="3">Gametophytic lethal phenotype in homozygous plants.</text>
</comment>
<comment type="similarity">
    <text evidence="7">Belongs to the TPT transporter family. GPT (TC 2.A.7.9) subfamily.</text>
</comment>
<comment type="sequence caution" evidence="7">
    <conflict type="erroneous gene model prediction">
        <sequence resource="EMBL-CDS" id="BAB08759"/>
    </conflict>
</comment>
<feature type="transit peptide" description="Chloroplast" evidence="1">
    <location>
        <begin position="1"/>
        <end position="65"/>
    </location>
</feature>
<feature type="chain" id="PRO_0000035711" description="Glucose-6-phosphate/phosphate translocator 1, chloroplastic">
    <location>
        <begin position="66"/>
        <end position="388"/>
    </location>
</feature>
<feature type="transmembrane region" description="Helical" evidence="1">
    <location>
        <begin position="95"/>
        <end position="115"/>
    </location>
</feature>
<feature type="transmembrane region" description="Helical" evidence="1">
    <location>
        <begin position="129"/>
        <end position="149"/>
    </location>
</feature>
<feature type="transmembrane region" description="Helical" evidence="1">
    <location>
        <begin position="158"/>
        <end position="178"/>
    </location>
</feature>
<feature type="transmembrane region" description="Helical" evidence="1">
    <location>
        <begin position="211"/>
        <end position="231"/>
    </location>
</feature>
<feature type="transmembrane region" description="Helical" evidence="1">
    <location>
        <begin position="233"/>
        <end position="253"/>
    </location>
</feature>
<feature type="transmembrane region" description="Helical" evidence="1">
    <location>
        <begin position="273"/>
        <end position="293"/>
    </location>
</feature>
<feature type="transmembrane region" description="Helical" evidence="1">
    <location>
        <begin position="305"/>
        <end position="325"/>
    </location>
</feature>
<feature type="transmembrane region" description="Helical" evidence="1">
    <location>
        <begin position="363"/>
        <end position="383"/>
    </location>
</feature>
<feature type="domain" description="EamA">
    <location>
        <begin position="112"/>
        <end position="229"/>
    </location>
</feature>
<feature type="mutagenesis site" description="No effect on targeting to endoplasmic reticulum." evidence="5">
    <original>S</original>
    <variation>A</variation>
    <variation>D</variation>
    <location>
        <position position="27"/>
    </location>
</feature>
<feature type="mutagenesis site" description="No effect on targeting to endoplasmic reticulum." evidence="5">
    <original>C</original>
    <variation>S</variation>
    <location>
        <position position="65"/>
    </location>
</feature>
<feature type="sequence conflict" description="In Ref. 6; AAM63660." evidence="7" ref="6">
    <original>R</original>
    <variation>K</variation>
    <location>
        <position position="57"/>
    </location>
</feature>
<feature type="sequence conflict" description="In Ref. 6; AAM63660." evidence="7" ref="6">
    <original>I</original>
    <variation>N</variation>
    <location>
        <position position="351"/>
    </location>
</feature>
<gene>
    <name evidence="6" type="primary">GPT1</name>
    <name evidence="8" type="ordered locus">At5g54800</name>
    <name evidence="9" type="ORF">MBG8.6</name>
</gene>
<organism>
    <name type="scientific">Arabidopsis thaliana</name>
    <name type="common">Mouse-ear cress</name>
    <dbReference type="NCBI Taxonomy" id="3702"/>
    <lineage>
        <taxon>Eukaryota</taxon>
        <taxon>Viridiplantae</taxon>
        <taxon>Streptophyta</taxon>
        <taxon>Embryophyta</taxon>
        <taxon>Tracheophyta</taxon>
        <taxon>Spermatophyta</taxon>
        <taxon>Magnoliopsida</taxon>
        <taxon>eudicotyledons</taxon>
        <taxon>Gunneridae</taxon>
        <taxon>Pentapetalae</taxon>
        <taxon>rosids</taxon>
        <taxon>malvids</taxon>
        <taxon>Brassicales</taxon>
        <taxon>Brassicaceae</taxon>
        <taxon>Camelineae</taxon>
        <taxon>Arabidopsis</taxon>
    </lineage>
</organism>
<keyword id="KW-0150">Chloroplast</keyword>
<keyword id="KW-0256">Endoplasmic reticulum</keyword>
<keyword id="KW-0472">Membrane</keyword>
<keyword id="KW-0576">Peroxisome</keyword>
<keyword id="KW-0934">Plastid</keyword>
<keyword id="KW-1185">Reference proteome</keyword>
<keyword id="KW-0762">Sugar transport</keyword>
<keyword id="KW-0809">Transit peptide</keyword>
<keyword id="KW-0812">Transmembrane</keyword>
<keyword id="KW-1133">Transmembrane helix</keyword>
<keyword id="KW-0813">Transport</keyword>
<dbReference type="EMBL" id="AF233658">
    <property type="protein sequence ID" value="AAF42936.1"/>
    <property type="molecule type" value="mRNA"/>
</dbReference>
<dbReference type="EMBL" id="AB005232">
    <property type="protein sequence ID" value="BAB08759.1"/>
    <property type="status" value="ALT_SEQ"/>
    <property type="molecule type" value="Genomic_DNA"/>
</dbReference>
<dbReference type="EMBL" id="CP002688">
    <property type="protein sequence ID" value="AED96542.1"/>
    <property type="molecule type" value="Genomic_DNA"/>
</dbReference>
<dbReference type="EMBL" id="AY057679">
    <property type="protein sequence ID" value="AAL15310.1"/>
    <property type="molecule type" value="mRNA"/>
</dbReference>
<dbReference type="EMBL" id="BT002212">
    <property type="protein sequence ID" value="AAN72224.1"/>
    <property type="molecule type" value="mRNA"/>
</dbReference>
<dbReference type="EMBL" id="AK226479">
    <property type="protein sequence ID" value="BAE98621.1"/>
    <property type="molecule type" value="mRNA"/>
</dbReference>
<dbReference type="EMBL" id="AY086600">
    <property type="protein sequence ID" value="AAM63660.1"/>
    <property type="molecule type" value="mRNA"/>
</dbReference>
<dbReference type="RefSeq" id="NP_568812.1">
    <property type="nucleotide sequence ID" value="NM_124861.5"/>
</dbReference>
<dbReference type="SMR" id="Q9M5A9"/>
<dbReference type="BioGRID" id="20814">
    <property type="interactions" value="18"/>
</dbReference>
<dbReference type="FunCoup" id="Q9M5A9">
    <property type="interactions" value="3644"/>
</dbReference>
<dbReference type="IntAct" id="Q9M5A9">
    <property type="interactions" value="17"/>
</dbReference>
<dbReference type="STRING" id="3702.Q9M5A9"/>
<dbReference type="iPTMnet" id="Q9M5A9"/>
<dbReference type="SwissPalm" id="Q9M5A9"/>
<dbReference type="PaxDb" id="3702-AT5G54800.1"/>
<dbReference type="ProteomicsDB" id="220700"/>
<dbReference type="EnsemblPlants" id="AT5G54800.1">
    <property type="protein sequence ID" value="AT5G54800.1"/>
    <property type="gene ID" value="AT5G54800"/>
</dbReference>
<dbReference type="GeneID" id="835570"/>
<dbReference type="Gramene" id="AT5G54800.1">
    <property type="protein sequence ID" value="AT5G54800.1"/>
    <property type="gene ID" value="AT5G54800"/>
</dbReference>
<dbReference type="KEGG" id="ath:AT5G54800"/>
<dbReference type="Araport" id="AT5G54800"/>
<dbReference type="TAIR" id="AT5G54800">
    <property type="gene designation" value="GPT1"/>
</dbReference>
<dbReference type="eggNOG" id="KOG1441">
    <property type="taxonomic scope" value="Eukaryota"/>
</dbReference>
<dbReference type="HOGENOM" id="CLU_019048_0_1_1"/>
<dbReference type="InParanoid" id="Q9M5A9"/>
<dbReference type="OMA" id="RSFQHAN"/>
<dbReference type="OrthoDB" id="6418713at2759"/>
<dbReference type="PhylomeDB" id="Q9M5A9"/>
<dbReference type="CD-CODE" id="4299E36E">
    <property type="entry name" value="Nucleolus"/>
</dbReference>
<dbReference type="PRO" id="PR:Q9M5A9"/>
<dbReference type="Proteomes" id="UP000006548">
    <property type="component" value="Chromosome 5"/>
</dbReference>
<dbReference type="ExpressionAtlas" id="Q9M5A9">
    <property type="expression patterns" value="baseline and differential"/>
</dbReference>
<dbReference type="GO" id="GO:0009507">
    <property type="term" value="C:chloroplast"/>
    <property type="evidence" value="ECO:0000314"/>
    <property type="project" value="TAIR"/>
</dbReference>
<dbReference type="GO" id="GO:0031969">
    <property type="term" value="C:chloroplast membrane"/>
    <property type="evidence" value="ECO:0007669"/>
    <property type="project" value="UniProtKB-SubCell"/>
</dbReference>
<dbReference type="GO" id="GO:0005789">
    <property type="term" value="C:endoplasmic reticulum membrane"/>
    <property type="evidence" value="ECO:0007669"/>
    <property type="project" value="UniProtKB-SubCell"/>
</dbReference>
<dbReference type="GO" id="GO:0005778">
    <property type="term" value="C:peroxisomal membrane"/>
    <property type="evidence" value="ECO:0007669"/>
    <property type="project" value="UniProtKB-SubCell"/>
</dbReference>
<dbReference type="GO" id="GO:0005777">
    <property type="term" value="C:peroxisome"/>
    <property type="evidence" value="ECO:0000314"/>
    <property type="project" value="TAIR"/>
</dbReference>
<dbReference type="GO" id="GO:0009536">
    <property type="term" value="C:plastid"/>
    <property type="evidence" value="ECO:0007005"/>
    <property type="project" value="TAIR"/>
</dbReference>
<dbReference type="GO" id="GO:0015152">
    <property type="term" value="F:glucose-6-phosphate transmembrane transporter activity"/>
    <property type="evidence" value="ECO:0000314"/>
    <property type="project" value="UniProtKB"/>
</dbReference>
<dbReference type="GO" id="GO:0005315">
    <property type="term" value="F:phosphate transmembrane transporter activity"/>
    <property type="evidence" value="ECO:0000314"/>
    <property type="project" value="UniProtKB"/>
</dbReference>
<dbReference type="GO" id="GO:0015120">
    <property type="term" value="F:phosphoglycerate transmembrane transporter activity"/>
    <property type="evidence" value="ECO:0000314"/>
    <property type="project" value="UniProtKB"/>
</dbReference>
<dbReference type="GO" id="GO:0019904">
    <property type="term" value="F:protein domain specific binding"/>
    <property type="evidence" value="ECO:0000353"/>
    <property type="project" value="CAFA"/>
</dbReference>
<dbReference type="GO" id="GO:0071917">
    <property type="term" value="F:triose-phosphate transmembrane transporter activity"/>
    <property type="evidence" value="ECO:0000314"/>
    <property type="project" value="UniProtKB"/>
</dbReference>
<dbReference type="GO" id="GO:0009793">
    <property type="term" value="P:embryo development ending in seed dormancy"/>
    <property type="evidence" value="ECO:0000315"/>
    <property type="project" value="UniProtKB"/>
</dbReference>
<dbReference type="GO" id="GO:0009553">
    <property type="term" value="P:embryo sac development"/>
    <property type="evidence" value="ECO:0000315"/>
    <property type="project" value="TAIR"/>
</dbReference>
<dbReference type="GO" id="GO:0015760">
    <property type="term" value="P:glucose-6-phosphate transport"/>
    <property type="evidence" value="ECO:0000314"/>
    <property type="project" value="UniProtKB"/>
</dbReference>
<dbReference type="GO" id="GO:0034389">
    <property type="term" value="P:lipid droplet organization"/>
    <property type="evidence" value="ECO:0000315"/>
    <property type="project" value="TAIR"/>
</dbReference>
<dbReference type="GO" id="GO:0015714">
    <property type="term" value="P:phosphoenolpyruvate transport"/>
    <property type="evidence" value="ECO:0000314"/>
    <property type="project" value="UniProtKB"/>
</dbReference>
<dbReference type="GO" id="GO:0015713">
    <property type="term" value="P:phosphoglycerate transmembrane transport"/>
    <property type="evidence" value="ECO:0000314"/>
    <property type="project" value="UniProtKB"/>
</dbReference>
<dbReference type="GO" id="GO:0010152">
    <property type="term" value="P:pollen maturation"/>
    <property type="evidence" value="ECO:0000315"/>
    <property type="project" value="TAIR"/>
</dbReference>
<dbReference type="GO" id="GO:0009624">
    <property type="term" value="P:response to nematode"/>
    <property type="evidence" value="ECO:0007007"/>
    <property type="project" value="TAIR"/>
</dbReference>
<dbReference type="GO" id="GO:0035436">
    <property type="term" value="P:triose phosphate transmembrane transport"/>
    <property type="evidence" value="ECO:0000314"/>
    <property type="project" value="UniProtKB"/>
</dbReference>
<dbReference type="GO" id="GO:0007033">
    <property type="term" value="P:vacuole organization"/>
    <property type="evidence" value="ECO:0000315"/>
    <property type="project" value="TAIR"/>
</dbReference>
<dbReference type="InterPro" id="IPR004853">
    <property type="entry name" value="Sugar_P_trans_dom"/>
</dbReference>
<dbReference type="InterPro" id="IPR004696">
    <property type="entry name" value="Tpt_PEP_transl"/>
</dbReference>
<dbReference type="InterPro" id="IPR050186">
    <property type="entry name" value="TPT_transporter"/>
</dbReference>
<dbReference type="NCBIfam" id="TIGR00817">
    <property type="entry name" value="tpt"/>
    <property type="match status" value="1"/>
</dbReference>
<dbReference type="PANTHER" id="PTHR11132">
    <property type="entry name" value="SOLUTE CARRIER FAMILY 35"/>
    <property type="match status" value="1"/>
</dbReference>
<dbReference type="Pfam" id="PF03151">
    <property type="entry name" value="TPT"/>
    <property type="match status" value="1"/>
</dbReference>
<dbReference type="SUPFAM" id="SSF103481">
    <property type="entry name" value="Multidrug resistance efflux transporter EmrE"/>
    <property type="match status" value="1"/>
</dbReference>
<proteinExistence type="evidence at protein level"/>
<evidence type="ECO:0000255" key="1"/>
<evidence type="ECO:0000269" key="2">
    <source>
    </source>
</evidence>
<evidence type="ECO:0000269" key="3">
    <source>
    </source>
</evidence>
<evidence type="ECO:0000269" key="4">
    <source>
    </source>
</evidence>
<evidence type="ECO:0000269" key="5">
    <source>
    </source>
</evidence>
<evidence type="ECO:0000303" key="6">
    <source>
    </source>
</evidence>
<evidence type="ECO:0000305" key="7"/>
<evidence type="ECO:0000312" key="8">
    <source>
        <dbReference type="Araport" id="AT5G54800"/>
    </source>
</evidence>
<evidence type="ECO:0000312" key="9">
    <source>
        <dbReference type="EMBL" id="BAB08759.1"/>
    </source>
</evidence>
<protein>
    <recommendedName>
        <fullName evidence="6">Glucose-6-phosphate/phosphate translocator 1, chloroplastic</fullName>
        <shortName evidence="6">AtGPT1</shortName>
    </recommendedName>
</protein>